<evidence type="ECO:0000250" key="1">
    <source>
        <dbReference type="UniProtKB" id="Q9CCZ4"/>
    </source>
</evidence>
<evidence type="ECO:0000305" key="2"/>
<organism>
    <name type="scientific">Mycobacterium bovis (strain ATCC BAA-935 / AF2122/97)</name>
    <dbReference type="NCBI Taxonomy" id="233413"/>
    <lineage>
        <taxon>Bacteria</taxon>
        <taxon>Bacillati</taxon>
        <taxon>Actinomycetota</taxon>
        <taxon>Actinomycetes</taxon>
        <taxon>Mycobacteriales</taxon>
        <taxon>Mycobacteriaceae</taxon>
        <taxon>Mycobacterium</taxon>
        <taxon>Mycobacterium tuberculosis complex</taxon>
    </lineage>
</organism>
<comment type="function">
    <text evidence="1">Exhibits S-adenosyl-L-methionine-dependent methyltransferase activity.</text>
</comment>
<comment type="similarity">
    <text evidence="2">Belongs to the UPF0677 family.</text>
</comment>
<name>Y3432_MYCBO</name>
<sequence length="348" mass="38198">MARPMGKLPSNTRKCAQCAMAEALLEIAGQTINQKDLGRSGRMTRTDNDTWDLASSVGATATMIATARALASRAENPLINDPFAEPLVRAVGIDLFTRLASGELRLEDIGDHATGGRWMIDNIAIRTKFYDDFFGDATTAGIRQVVILAAGLDTRAYRLPWPPGTVVYEIDQPAVIKFKTRALANLNAEPNAERHAVAVDLRNDWPTALKNAGFDPARPTAFSAEGLLSYLPPQGQDRLLDAITALSAPDSRLATQSPLVLDLAEEDEKKMRMKSAAEAWRERGFDLDLTELIYFDQRNDVADYLAGSGWQVTTSTGKELFAAQGLPPFEDDHITRFADRRYISAVLK</sequence>
<protein>
    <recommendedName>
        <fullName>Putative S-adenosyl-L-methionine-dependent methyltransferase Mb3432</fullName>
        <ecNumber>2.1.1.-</ecNumber>
    </recommendedName>
</protein>
<keyword id="KW-0489">Methyltransferase</keyword>
<keyword id="KW-1185">Reference proteome</keyword>
<keyword id="KW-0949">S-adenosyl-L-methionine</keyword>
<keyword id="KW-0808">Transferase</keyword>
<dbReference type="EC" id="2.1.1.-"/>
<dbReference type="EMBL" id="LT708304">
    <property type="protein sequence ID" value="SIU02061.1"/>
    <property type="molecule type" value="Genomic_DNA"/>
</dbReference>
<dbReference type="RefSeq" id="NP_857073.1">
    <property type="nucleotide sequence ID" value="NC_002945.3"/>
</dbReference>
<dbReference type="SMR" id="P59986"/>
<dbReference type="KEGG" id="mbo:BQ2027_MB3432"/>
<dbReference type="PATRIC" id="fig|233413.5.peg.3767"/>
<dbReference type="Proteomes" id="UP000001419">
    <property type="component" value="Chromosome"/>
</dbReference>
<dbReference type="GO" id="GO:0008168">
    <property type="term" value="F:methyltransferase activity"/>
    <property type="evidence" value="ECO:0007669"/>
    <property type="project" value="UniProtKB-KW"/>
</dbReference>
<dbReference type="GO" id="GO:0032259">
    <property type="term" value="P:methylation"/>
    <property type="evidence" value="ECO:0007669"/>
    <property type="project" value="UniProtKB-KW"/>
</dbReference>
<dbReference type="FunFam" id="3.40.50.150:FF:000152">
    <property type="entry name" value="S-adenosyl-L-methionine-dependent methyltransferase"/>
    <property type="match status" value="1"/>
</dbReference>
<dbReference type="Gene3D" id="3.40.50.150">
    <property type="entry name" value="Vaccinia Virus protein VP39"/>
    <property type="match status" value="1"/>
</dbReference>
<dbReference type="InterPro" id="IPR007213">
    <property type="entry name" value="Ppm1/Ppm2/Tcmp"/>
</dbReference>
<dbReference type="InterPro" id="IPR029063">
    <property type="entry name" value="SAM-dependent_MTases_sf"/>
</dbReference>
<dbReference type="InterPro" id="IPR011610">
    <property type="entry name" value="SAM_mthyl_Trfase_ML2640-like"/>
</dbReference>
<dbReference type="NCBIfam" id="TIGR00027">
    <property type="entry name" value="mthyl_TIGR00027"/>
    <property type="match status" value="1"/>
</dbReference>
<dbReference type="PANTHER" id="PTHR43619">
    <property type="entry name" value="S-ADENOSYL-L-METHIONINE-DEPENDENT METHYLTRANSFERASE YKTD-RELATED"/>
    <property type="match status" value="1"/>
</dbReference>
<dbReference type="PANTHER" id="PTHR43619:SF2">
    <property type="entry name" value="S-ADENOSYL-L-METHIONINE-DEPENDENT METHYLTRANSFERASES SUPERFAMILY PROTEIN"/>
    <property type="match status" value="1"/>
</dbReference>
<dbReference type="Pfam" id="PF04072">
    <property type="entry name" value="LCM"/>
    <property type="match status" value="1"/>
</dbReference>
<dbReference type="SUPFAM" id="SSF53335">
    <property type="entry name" value="S-adenosyl-L-methionine-dependent methyltransferases"/>
    <property type="match status" value="1"/>
</dbReference>
<reference key="1">
    <citation type="journal article" date="2003" name="Proc. Natl. Acad. Sci. U.S.A.">
        <title>The complete genome sequence of Mycobacterium bovis.</title>
        <authorList>
            <person name="Garnier T."/>
            <person name="Eiglmeier K."/>
            <person name="Camus J.-C."/>
            <person name="Medina N."/>
            <person name="Mansoor H."/>
            <person name="Pryor M."/>
            <person name="Duthoy S."/>
            <person name="Grondin S."/>
            <person name="Lacroix C."/>
            <person name="Monsempe C."/>
            <person name="Simon S."/>
            <person name="Harris B."/>
            <person name="Atkin R."/>
            <person name="Doggett J."/>
            <person name="Mayes R."/>
            <person name="Keating L."/>
            <person name="Wheeler P.R."/>
            <person name="Parkhill J."/>
            <person name="Barrell B.G."/>
            <person name="Cole S.T."/>
            <person name="Gordon S.V."/>
            <person name="Hewinson R.G."/>
        </authorList>
    </citation>
    <scope>NUCLEOTIDE SEQUENCE [LARGE SCALE GENOMIC DNA]</scope>
    <source>
        <strain>ATCC BAA-935 / AF2122/97</strain>
    </source>
</reference>
<reference key="2">
    <citation type="journal article" date="2017" name="Genome Announc.">
        <title>Updated reference genome sequence and annotation of Mycobacterium bovis AF2122/97.</title>
        <authorList>
            <person name="Malone K.M."/>
            <person name="Farrell D."/>
            <person name="Stuber T.P."/>
            <person name="Schubert O.T."/>
            <person name="Aebersold R."/>
            <person name="Robbe-Austerman S."/>
            <person name="Gordon S.V."/>
        </authorList>
    </citation>
    <scope>NUCLEOTIDE SEQUENCE [LARGE SCALE GENOMIC DNA]</scope>
    <scope>GENOME REANNOTATION</scope>
    <source>
        <strain>ATCC BAA-935 / AF2122/97</strain>
    </source>
</reference>
<gene>
    <name type="ordered locus">BQ2027_MB3432</name>
</gene>
<proteinExistence type="inferred from homology"/>
<feature type="chain" id="PRO_0000104117" description="Putative S-adenosyl-L-methionine-dependent methyltransferase Mb3432">
    <location>
        <begin position="1"/>
        <end position="348"/>
    </location>
</feature>
<feature type="binding site" evidence="1">
    <location>
        <position position="171"/>
    </location>
    <ligand>
        <name>S-adenosyl-L-methionine</name>
        <dbReference type="ChEBI" id="CHEBI:59789"/>
    </ligand>
</feature>
<feature type="binding site" evidence="1">
    <location>
        <begin position="200"/>
        <end position="201"/>
    </location>
    <ligand>
        <name>S-adenosyl-L-methionine</name>
        <dbReference type="ChEBI" id="CHEBI:59789"/>
    </ligand>
</feature>
<accession>P59986</accession>
<accession>A0A1R3Y422</accession>
<accession>X2BNB9</accession>